<dbReference type="EMBL" id="AM421808">
    <property type="protein sequence ID" value="CAM10868.1"/>
    <property type="molecule type" value="Genomic_DNA"/>
</dbReference>
<dbReference type="RefSeq" id="WP_002212556.1">
    <property type="nucleotide sequence ID" value="NC_008767.1"/>
</dbReference>
<dbReference type="SMR" id="A1KVG4"/>
<dbReference type="GeneID" id="93387558"/>
<dbReference type="KEGG" id="nmc:NMC1688"/>
<dbReference type="HOGENOM" id="CLU_160655_4_0_4"/>
<dbReference type="Proteomes" id="UP000002286">
    <property type="component" value="Chromosome"/>
</dbReference>
<dbReference type="GO" id="GO:0005829">
    <property type="term" value="C:cytosol"/>
    <property type="evidence" value="ECO:0007669"/>
    <property type="project" value="TreeGrafter"/>
</dbReference>
<dbReference type="GO" id="GO:0015935">
    <property type="term" value="C:small ribosomal subunit"/>
    <property type="evidence" value="ECO:0007669"/>
    <property type="project" value="TreeGrafter"/>
</dbReference>
<dbReference type="GO" id="GO:0070181">
    <property type="term" value="F:small ribosomal subunit rRNA binding"/>
    <property type="evidence" value="ECO:0007669"/>
    <property type="project" value="TreeGrafter"/>
</dbReference>
<dbReference type="GO" id="GO:0003735">
    <property type="term" value="F:structural constituent of ribosome"/>
    <property type="evidence" value="ECO:0007669"/>
    <property type="project" value="InterPro"/>
</dbReference>
<dbReference type="GO" id="GO:0006412">
    <property type="term" value="P:translation"/>
    <property type="evidence" value="ECO:0007669"/>
    <property type="project" value="UniProtKB-UniRule"/>
</dbReference>
<dbReference type="FunFam" id="1.20.58.110:FF:000001">
    <property type="entry name" value="30S ribosomal protein S20"/>
    <property type="match status" value="1"/>
</dbReference>
<dbReference type="Gene3D" id="1.20.58.110">
    <property type="entry name" value="Ribosomal protein S20"/>
    <property type="match status" value="1"/>
</dbReference>
<dbReference type="HAMAP" id="MF_00500">
    <property type="entry name" value="Ribosomal_bS20"/>
    <property type="match status" value="1"/>
</dbReference>
<dbReference type="InterPro" id="IPR002583">
    <property type="entry name" value="Ribosomal_bS20"/>
</dbReference>
<dbReference type="InterPro" id="IPR036510">
    <property type="entry name" value="Ribosomal_bS20_sf"/>
</dbReference>
<dbReference type="NCBIfam" id="TIGR00029">
    <property type="entry name" value="S20"/>
    <property type="match status" value="1"/>
</dbReference>
<dbReference type="PANTHER" id="PTHR33398">
    <property type="entry name" value="30S RIBOSOMAL PROTEIN S20"/>
    <property type="match status" value="1"/>
</dbReference>
<dbReference type="PANTHER" id="PTHR33398:SF1">
    <property type="entry name" value="SMALL RIBOSOMAL SUBUNIT PROTEIN BS20C"/>
    <property type="match status" value="1"/>
</dbReference>
<dbReference type="Pfam" id="PF01649">
    <property type="entry name" value="Ribosomal_S20p"/>
    <property type="match status" value="1"/>
</dbReference>
<dbReference type="SUPFAM" id="SSF46992">
    <property type="entry name" value="Ribosomal protein S20"/>
    <property type="match status" value="1"/>
</dbReference>
<comment type="function">
    <text evidence="1">Binds directly to 16S ribosomal RNA.</text>
</comment>
<comment type="similarity">
    <text evidence="1">Belongs to the bacterial ribosomal protein bS20 family.</text>
</comment>
<organism>
    <name type="scientific">Neisseria meningitidis serogroup C / serotype 2a (strain ATCC 700532 / DSM 15464 / FAM18)</name>
    <dbReference type="NCBI Taxonomy" id="272831"/>
    <lineage>
        <taxon>Bacteria</taxon>
        <taxon>Pseudomonadati</taxon>
        <taxon>Pseudomonadota</taxon>
        <taxon>Betaproteobacteria</taxon>
        <taxon>Neisseriales</taxon>
        <taxon>Neisseriaceae</taxon>
        <taxon>Neisseria</taxon>
    </lineage>
</organism>
<proteinExistence type="inferred from homology"/>
<name>RS20_NEIMF</name>
<keyword id="KW-0687">Ribonucleoprotein</keyword>
<keyword id="KW-0689">Ribosomal protein</keyword>
<keyword id="KW-0694">RNA-binding</keyword>
<keyword id="KW-0699">rRNA-binding</keyword>
<protein>
    <recommendedName>
        <fullName evidence="1">Small ribosomal subunit protein bS20</fullName>
    </recommendedName>
    <alternativeName>
        <fullName evidence="3">30S ribosomal protein S20</fullName>
    </alternativeName>
</protein>
<reference key="1">
    <citation type="journal article" date="2007" name="PLoS Genet.">
        <title>Meningococcal genetic variation mechanisms viewed through comparative analysis of serogroup C strain FAM18.</title>
        <authorList>
            <person name="Bentley S.D."/>
            <person name="Vernikos G.S."/>
            <person name="Snyder L.A.S."/>
            <person name="Churcher C."/>
            <person name="Arrowsmith C."/>
            <person name="Chillingworth T."/>
            <person name="Cronin A."/>
            <person name="Davis P.H."/>
            <person name="Holroyd N.E."/>
            <person name="Jagels K."/>
            <person name="Maddison M."/>
            <person name="Moule S."/>
            <person name="Rabbinowitsch E."/>
            <person name="Sharp S."/>
            <person name="Unwin L."/>
            <person name="Whitehead S."/>
            <person name="Quail M.A."/>
            <person name="Achtman M."/>
            <person name="Barrell B.G."/>
            <person name="Saunders N.J."/>
            <person name="Parkhill J."/>
        </authorList>
    </citation>
    <scope>NUCLEOTIDE SEQUENCE [LARGE SCALE GENOMIC DNA]</scope>
    <source>
        <strain>ATCC 700532 / DSM 15464 / FAM18</strain>
    </source>
</reference>
<gene>
    <name evidence="1" type="primary">rpsT</name>
    <name type="ordered locus">NMC1688</name>
</gene>
<feature type="chain" id="PRO_1000014613" description="Small ribosomal subunit protein bS20">
    <location>
        <begin position="1"/>
        <end position="87"/>
    </location>
</feature>
<feature type="region of interest" description="Disordered" evidence="2">
    <location>
        <begin position="1"/>
        <end position="22"/>
    </location>
</feature>
<feature type="compositionally biased region" description="Basic residues" evidence="2">
    <location>
        <begin position="7"/>
        <end position="19"/>
    </location>
</feature>
<accession>A1KVG4</accession>
<sequence length="87" mass="9508">MANSAQARKRARQSVKQRAHNASLRTAFRTAVKKVLKAVEAGDKAAAQAVYQESVKVIDRIADKGVFHKNKAARHKSRLSAKVKALA</sequence>
<evidence type="ECO:0000255" key="1">
    <source>
        <dbReference type="HAMAP-Rule" id="MF_00500"/>
    </source>
</evidence>
<evidence type="ECO:0000256" key="2">
    <source>
        <dbReference type="SAM" id="MobiDB-lite"/>
    </source>
</evidence>
<evidence type="ECO:0000305" key="3"/>